<proteinExistence type="inferred from homology"/>
<reference key="1">
    <citation type="journal article" date="2002" name="DNA Res.">
        <title>Complete genome structure of the thermophilic cyanobacterium Thermosynechococcus elongatus BP-1.</title>
        <authorList>
            <person name="Nakamura Y."/>
            <person name="Kaneko T."/>
            <person name="Sato S."/>
            <person name="Ikeuchi M."/>
            <person name="Katoh H."/>
            <person name="Sasamoto S."/>
            <person name="Watanabe A."/>
            <person name="Iriguchi M."/>
            <person name="Kawashima K."/>
            <person name="Kimura T."/>
            <person name="Kishida Y."/>
            <person name="Kiyokawa C."/>
            <person name="Kohara M."/>
            <person name="Matsumoto M."/>
            <person name="Matsuno A."/>
            <person name="Nakazaki N."/>
            <person name="Shimpo S."/>
            <person name="Sugimoto M."/>
            <person name="Takeuchi C."/>
            <person name="Yamada M."/>
            <person name="Tabata S."/>
        </authorList>
    </citation>
    <scope>NUCLEOTIDE SEQUENCE [LARGE SCALE GENOMIC DNA]</scope>
    <source>
        <strain>NIES-2133 / IAM M-273 / BP-1</strain>
    </source>
</reference>
<keyword id="KW-1185">Reference proteome</keyword>
<keyword id="KW-0687">Ribonucleoprotein</keyword>
<keyword id="KW-0689">Ribosomal protein</keyword>
<protein>
    <recommendedName>
        <fullName evidence="1">Large ribosomal subunit protein bL17</fullName>
    </recommendedName>
    <alternativeName>
        <fullName evidence="2">50S ribosomal protein L17</fullName>
    </alternativeName>
</protein>
<name>RL17_THEVB</name>
<feature type="chain" id="PRO_0000267953" description="Large ribosomal subunit protein bL17">
    <location>
        <begin position="1"/>
        <end position="116"/>
    </location>
</feature>
<dbReference type="EMBL" id="BA000039">
    <property type="protein sequence ID" value="BAC07659.1"/>
    <property type="molecule type" value="Genomic_DNA"/>
</dbReference>
<dbReference type="RefSeq" id="NP_680897.1">
    <property type="nucleotide sequence ID" value="NC_004113.1"/>
</dbReference>
<dbReference type="RefSeq" id="WP_011055961.1">
    <property type="nucleotide sequence ID" value="NC_004113.1"/>
</dbReference>
<dbReference type="SMR" id="Q8DMK9"/>
<dbReference type="STRING" id="197221.gene:10746684"/>
<dbReference type="EnsemblBacteria" id="BAC07659">
    <property type="protein sequence ID" value="BAC07659"/>
    <property type="gene ID" value="BAC07659"/>
</dbReference>
<dbReference type="KEGG" id="tel:tlr0106"/>
<dbReference type="PATRIC" id="fig|197221.4.peg.109"/>
<dbReference type="eggNOG" id="COG0203">
    <property type="taxonomic scope" value="Bacteria"/>
</dbReference>
<dbReference type="Proteomes" id="UP000000440">
    <property type="component" value="Chromosome"/>
</dbReference>
<dbReference type="GO" id="GO:0022625">
    <property type="term" value="C:cytosolic large ribosomal subunit"/>
    <property type="evidence" value="ECO:0007669"/>
    <property type="project" value="TreeGrafter"/>
</dbReference>
<dbReference type="GO" id="GO:0003735">
    <property type="term" value="F:structural constituent of ribosome"/>
    <property type="evidence" value="ECO:0007669"/>
    <property type="project" value="InterPro"/>
</dbReference>
<dbReference type="GO" id="GO:0006412">
    <property type="term" value="P:translation"/>
    <property type="evidence" value="ECO:0007669"/>
    <property type="project" value="UniProtKB-UniRule"/>
</dbReference>
<dbReference type="FunFam" id="3.90.1030.10:FF:000001">
    <property type="entry name" value="50S ribosomal protein L17"/>
    <property type="match status" value="1"/>
</dbReference>
<dbReference type="Gene3D" id="3.90.1030.10">
    <property type="entry name" value="Ribosomal protein L17"/>
    <property type="match status" value="1"/>
</dbReference>
<dbReference type="HAMAP" id="MF_01368">
    <property type="entry name" value="Ribosomal_bL17"/>
    <property type="match status" value="1"/>
</dbReference>
<dbReference type="InterPro" id="IPR000456">
    <property type="entry name" value="Ribosomal_bL17"/>
</dbReference>
<dbReference type="InterPro" id="IPR047859">
    <property type="entry name" value="Ribosomal_bL17_CS"/>
</dbReference>
<dbReference type="InterPro" id="IPR036373">
    <property type="entry name" value="Ribosomal_bL17_sf"/>
</dbReference>
<dbReference type="NCBIfam" id="TIGR00059">
    <property type="entry name" value="L17"/>
    <property type="match status" value="1"/>
</dbReference>
<dbReference type="PANTHER" id="PTHR14413:SF16">
    <property type="entry name" value="LARGE RIBOSOMAL SUBUNIT PROTEIN BL17M"/>
    <property type="match status" value="1"/>
</dbReference>
<dbReference type="PANTHER" id="PTHR14413">
    <property type="entry name" value="RIBOSOMAL PROTEIN L17"/>
    <property type="match status" value="1"/>
</dbReference>
<dbReference type="Pfam" id="PF01196">
    <property type="entry name" value="Ribosomal_L17"/>
    <property type="match status" value="1"/>
</dbReference>
<dbReference type="SUPFAM" id="SSF64263">
    <property type="entry name" value="Prokaryotic ribosomal protein L17"/>
    <property type="match status" value="1"/>
</dbReference>
<dbReference type="PROSITE" id="PS01167">
    <property type="entry name" value="RIBOSOMAL_L17"/>
    <property type="match status" value="1"/>
</dbReference>
<evidence type="ECO:0000255" key="1">
    <source>
        <dbReference type="HAMAP-Rule" id="MF_01368"/>
    </source>
</evidence>
<evidence type="ECO:0000305" key="2"/>
<sequence>MRHQRRVPQLGRPADQRKALLRALTTELIRHGRITTTKARAKAVRAEAERMITLAKDGSLAARRRALGYLYDKQLVHSLFAQAPERYGDRQGGYTRIIRSVRRRGDNAELAVIELV</sequence>
<accession>Q8DMK9</accession>
<gene>
    <name evidence="1" type="primary">rplQ</name>
    <name evidence="1" type="synonym">rpl17</name>
    <name type="ordered locus">tlr0106</name>
</gene>
<organism>
    <name type="scientific">Thermosynechococcus vestitus (strain NIES-2133 / IAM M-273 / BP-1)</name>
    <dbReference type="NCBI Taxonomy" id="197221"/>
    <lineage>
        <taxon>Bacteria</taxon>
        <taxon>Bacillati</taxon>
        <taxon>Cyanobacteriota</taxon>
        <taxon>Cyanophyceae</taxon>
        <taxon>Acaryochloridales</taxon>
        <taxon>Thermosynechococcaceae</taxon>
        <taxon>Thermosynechococcus</taxon>
    </lineage>
</organism>
<comment type="subunit">
    <text evidence="1">Part of the 50S ribosomal subunit. Contacts protein L32.</text>
</comment>
<comment type="similarity">
    <text evidence="1">Belongs to the bacterial ribosomal protein bL17 family.</text>
</comment>